<sequence>MAHKKGQGSTQNNRDSAGRRLGVKKFGSEFVRAGNIIVRQRGTKMHPGNNVGMGKDHTLYALIDGVVKFEHKDRNRKKVSVVSQNFGE</sequence>
<proteinExistence type="inferred from homology"/>
<dbReference type="EMBL" id="CP001072">
    <property type="protein sequence ID" value="ACD47760.1"/>
    <property type="molecule type" value="Genomic_DNA"/>
</dbReference>
<dbReference type="RefSeq" id="WP_000940618.1">
    <property type="nucleotide sequence ID" value="NC_010698.2"/>
</dbReference>
<dbReference type="SMR" id="B2USC8"/>
<dbReference type="GeneID" id="93236667"/>
<dbReference type="KEGG" id="hps:HPSH_01540"/>
<dbReference type="HOGENOM" id="CLU_095424_4_0_7"/>
<dbReference type="GO" id="GO:0022625">
    <property type="term" value="C:cytosolic large ribosomal subunit"/>
    <property type="evidence" value="ECO:0007669"/>
    <property type="project" value="TreeGrafter"/>
</dbReference>
<dbReference type="GO" id="GO:0003735">
    <property type="term" value="F:structural constituent of ribosome"/>
    <property type="evidence" value="ECO:0007669"/>
    <property type="project" value="InterPro"/>
</dbReference>
<dbReference type="GO" id="GO:0006412">
    <property type="term" value="P:translation"/>
    <property type="evidence" value="ECO:0007669"/>
    <property type="project" value="UniProtKB-UniRule"/>
</dbReference>
<dbReference type="FunFam" id="2.40.50.100:FF:000026">
    <property type="entry name" value="50S ribosomal protein L27"/>
    <property type="match status" value="1"/>
</dbReference>
<dbReference type="Gene3D" id="2.40.50.100">
    <property type="match status" value="1"/>
</dbReference>
<dbReference type="HAMAP" id="MF_00539">
    <property type="entry name" value="Ribosomal_bL27"/>
    <property type="match status" value="1"/>
</dbReference>
<dbReference type="InterPro" id="IPR001684">
    <property type="entry name" value="Ribosomal_bL27"/>
</dbReference>
<dbReference type="InterPro" id="IPR018261">
    <property type="entry name" value="Ribosomal_bL27_CS"/>
</dbReference>
<dbReference type="NCBIfam" id="TIGR00062">
    <property type="entry name" value="L27"/>
    <property type="match status" value="1"/>
</dbReference>
<dbReference type="PANTHER" id="PTHR15893:SF0">
    <property type="entry name" value="LARGE RIBOSOMAL SUBUNIT PROTEIN BL27M"/>
    <property type="match status" value="1"/>
</dbReference>
<dbReference type="PANTHER" id="PTHR15893">
    <property type="entry name" value="RIBOSOMAL PROTEIN L27"/>
    <property type="match status" value="1"/>
</dbReference>
<dbReference type="Pfam" id="PF01016">
    <property type="entry name" value="Ribosomal_L27"/>
    <property type="match status" value="1"/>
</dbReference>
<dbReference type="PRINTS" id="PR00063">
    <property type="entry name" value="RIBOSOMALL27"/>
</dbReference>
<dbReference type="SUPFAM" id="SSF110324">
    <property type="entry name" value="Ribosomal L27 protein-like"/>
    <property type="match status" value="1"/>
</dbReference>
<dbReference type="PROSITE" id="PS00831">
    <property type="entry name" value="RIBOSOMAL_L27"/>
    <property type="match status" value="1"/>
</dbReference>
<name>RL27_HELPS</name>
<evidence type="ECO:0000255" key="1">
    <source>
        <dbReference type="HAMAP-Rule" id="MF_00539"/>
    </source>
</evidence>
<evidence type="ECO:0000256" key="2">
    <source>
        <dbReference type="SAM" id="MobiDB-lite"/>
    </source>
</evidence>
<evidence type="ECO:0000305" key="3"/>
<organism>
    <name type="scientific">Helicobacter pylori (strain Shi470)</name>
    <dbReference type="NCBI Taxonomy" id="512562"/>
    <lineage>
        <taxon>Bacteria</taxon>
        <taxon>Pseudomonadati</taxon>
        <taxon>Campylobacterota</taxon>
        <taxon>Epsilonproteobacteria</taxon>
        <taxon>Campylobacterales</taxon>
        <taxon>Helicobacteraceae</taxon>
        <taxon>Helicobacter</taxon>
    </lineage>
</organism>
<comment type="similarity">
    <text evidence="1">Belongs to the bacterial ribosomal protein bL27 family.</text>
</comment>
<accession>B2USC8</accession>
<protein>
    <recommendedName>
        <fullName evidence="1">Large ribosomal subunit protein bL27</fullName>
    </recommendedName>
    <alternativeName>
        <fullName evidence="3">50S ribosomal protein L27</fullName>
    </alternativeName>
</protein>
<reference key="1">
    <citation type="submission" date="2008-05" db="EMBL/GenBank/DDBJ databases">
        <title>Genome sequence of Helicobacter pylori from the remote Amazon: traces of Asian ancestry of the first Americans.</title>
        <authorList>
            <person name="Kersulyte D."/>
            <person name="Kalia A."/>
            <person name="Gilman R.H."/>
            <person name="Berg D.E."/>
        </authorList>
    </citation>
    <scope>NUCLEOTIDE SEQUENCE [LARGE SCALE GENOMIC DNA]</scope>
    <source>
        <strain>Shi470</strain>
    </source>
</reference>
<keyword id="KW-0687">Ribonucleoprotein</keyword>
<keyword id="KW-0689">Ribosomal protein</keyword>
<gene>
    <name evidence="1" type="primary">rpmA</name>
    <name type="ordered locus">HPSH_01540</name>
</gene>
<feature type="chain" id="PRO_1000128759" description="Large ribosomal subunit protein bL27">
    <location>
        <begin position="1"/>
        <end position="88"/>
    </location>
</feature>
<feature type="region of interest" description="Disordered" evidence="2">
    <location>
        <begin position="1"/>
        <end position="21"/>
    </location>
</feature>